<name>ARGR_STRR6</name>
<organism>
    <name type="scientific">Streptococcus pneumoniae (strain ATCC BAA-255 / R6)</name>
    <dbReference type="NCBI Taxonomy" id="171101"/>
    <lineage>
        <taxon>Bacteria</taxon>
        <taxon>Bacillati</taxon>
        <taxon>Bacillota</taxon>
        <taxon>Bacilli</taxon>
        <taxon>Lactobacillales</taxon>
        <taxon>Streptococcaceae</taxon>
        <taxon>Streptococcus</taxon>
    </lineage>
</organism>
<gene>
    <name type="primary">argR</name>
    <name type="ordered locus">spr1889</name>
</gene>
<reference key="1">
    <citation type="journal article" date="2001" name="J. Bacteriol.">
        <title>Genome of the bacterium Streptococcus pneumoniae strain R6.</title>
        <authorList>
            <person name="Hoskins J."/>
            <person name="Alborn W.E. Jr."/>
            <person name="Arnold J."/>
            <person name="Blaszczak L.C."/>
            <person name="Burgett S."/>
            <person name="DeHoff B.S."/>
            <person name="Estrem S.T."/>
            <person name="Fritz L."/>
            <person name="Fu D.-J."/>
            <person name="Fuller W."/>
            <person name="Geringer C."/>
            <person name="Gilmour R."/>
            <person name="Glass J.S."/>
            <person name="Khoja H."/>
            <person name="Kraft A.R."/>
            <person name="Lagace R.E."/>
            <person name="LeBlanc D.J."/>
            <person name="Lee L.N."/>
            <person name="Lefkowitz E.J."/>
            <person name="Lu J."/>
            <person name="Matsushima P."/>
            <person name="McAhren S.M."/>
            <person name="McHenney M."/>
            <person name="McLeaster K."/>
            <person name="Mundy C.W."/>
            <person name="Nicas T.I."/>
            <person name="Norris F.H."/>
            <person name="O'Gara M."/>
            <person name="Peery R.B."/>
            <person name="Robertson G.T."/>
            <person name="Rockey P."/>
            <person name="Sun P.-M."/>
            <person name="Winkler M.E."/>
            <person name="Yang Y."/>
            <person name="Young-Bellido M."/>
            <person name="Zhao G."/>
            <person name="Zook C.A."/>
            <person name="Baltz R.H."/>
            <person name="Jaskunas S.R."/>
            <person name="Rosteck P.R. Jr."/>
            <person name="Skatrud P.L."/>
            <person name="Glass J.I."/>
        </authorList>
    </citation>
    <scope>NUCLEOTIDE SEQUENCE [LARGE SCALE GENOMIC DNA]</scope>
    <source>
        <strain>ATCC BAA-255 / R6</strain>
    </source>
</reference>
<dbReference type="EMBL" id="AE007317">
    <property type="protein sequence ID" value="AAL00691.1"/>
    <property type="molecule type" value="Genomic_DNA"/>
</dbReference>
<dbReference type="PIR" id="F98107">
    <property type="entry name" value="F98107"/>
</dbReference>
<dbReference type="RefSeq" id="NP_359480.1">
    <property type="nucleotide sequence ID" value="NC_003098.1"/>
</dbReference>
<dbReference type="RefSeq" id="WP_001231472.1">
    <property type="nucleotide sequence ID" value="NC_003098.1"/>
</dbReference>
<dbReference type="SMR" id="P0A2Y3"/>
<dbReference type="STRING" id="171101.spr1889"/>
<dbReference type="GeneID" id="45652687"/>
<dbReference type="KEGG" id="spr:spr1889"/>
<dbReference type="PATRIC" id="fig|171101.6.peg.2038"/>
<dbReference type="eggNOG" id="COG1438">
    <property type="taxonomic scope" value="Bacteria"/>
</dbReference>
<dbReference type="HOGENOM" id="CLU_097103_3_0_9"/>
<dbReference type="UniPathway" id="UPA00068"/>
<dbReference type="Proteomes" id="UP000000586">
    <property type="component" value="Chromosome"/>
</dbReference>
<dbReference type="GO" id="GO:0005737">
    <property type="term" value="C:cytoplasm"/>
    <property type="evidence" value="ECO:0007669"/>
    <property type="project" value="UniProtKB-SubCell"/>
</dbReference>
<dbReference type="GO" id="GO:0005667">
    <property type="term" value="C:transcription regulator complex"/>
    <property type="evidence" value="ECO:0000318"/>
    <property type="project" value="GO_Central"/>
</dbReference>
<dbReference type="GO" id="GO:0034618">
    <property type="term" value="F:arginine binding"/>
    <property type="evidence" value="ECO:0007669"/>
    <property type="project" value="InterPro"/>
</dbReference>
<dbReference type="GO" id="GO:0000987">
    <property type="term" value="F:cis-regulatory region sequence-specific DNA binding"/>
    <property type="evidence" value="ECO:0000318"/>
    <property type="project" value="GO_Central"/>
</dbReference>
<dbReference type="GO" id="GO:0003700">
    <property type="term" value="F:DNA-binding transcription factor activity"/>
    <property type="evidence" value="ECO:0007669"/>
    <property type="project" value="UniProtKB-UniRule"/>
</dbReference>
<dbReference type="GO" id="GO:0006526">
    <property type="term" value="P:L-arginine biosynthetic process"/>
    <property type="evidence" value="ECO:0007669"/>
    <property type="project" value="UniProtKB-UniPathway"/>
</dbReference>
<dbReference type="GO" id="GO:0051259">
    <property type="term" value="P:protein complex oligomerization"/>
    <property type="evidence" value="ECO:0007669"/>
    <property type="project" value="InterPro"/>
</dbReference>
<dbReference type="GO" id="GO:1900079">
    <property type="term" value="P:regulation of arginine biosynthetic process"/>
    <property type="evidence" value="ECO:0007669"/>
    <property type="project" value="UniProtKB-UniRule"/>
</dbReference>
<dbReference type="GO" id="GO:0000821">
    <property type="term" value="P:regulation of arginine metabolic process"/>
    <property type="evidence" value="ECO:0000318"/>
    <property type="project" value="GO_Central"/>
</dbReference>
<dbReference type="Gene3D" id="3.30.1360.40">
    <property type="match status" value="1"/>
</dbReference>
<dbReference type="Gene3D" id="1.10.10.10">
    <property type="entry name" value="Winged helix-like DNA-binding domain superfamily/Winged helix DNA-binding domain"/>
    <property type="match status" value="1"/>
</dbReference>
<dbReference type="HAMAP" id="MF_00173">
    <property type="entry name" value="Arg_repressor"/>
    <property type="match status" value="1"/>
</dbReference>
<dbReference type="InterPro" id="IPR001669">
    <property type="entry name" value="Arg_repress"/>
</dbReference>
<dbReference type="InterPro" id="IPR020899">
    <property type="entry name" value="Arg_repress_C"/>
</dbReference>
<dbReference type="InterPro" id="IPR036251">
    <property type="entry name" value="Arg_repress_C_sf"/>
</dbReference>
<dbReference type="InterPro" id="IPR020900">
    <property type="entry name" value="Arg_repress_DNA-bd"/>
</dbReference>
<dbReference type="InterPro" id="IPR036388">
    <property type="entry name" value="WH-like_DNA-bd_sf"/>
</dbReference>
<dbReference type="InterPro" id="IPR036390">
    <property type="entry name" value="WH_DNA-bd_sf"/>
</dbReference>
<dbReference type="NCBIfam" id="TIGR01529">
    <property type="entry name" value="argR_whole"/>
    <property type="match status" value="1"/>
</dbReference>
<dbReference type="PANTHER" id="PTHR34471">
    <property type="entry name" value="ARGININE REPRESSOR"/>
    <property type="match status" value="1"/>
</dbReference>
<dbReference type="PANTHER" id="PTHR34471:SF1">
    <property type="entry name" value="ARGININE REPRESSOR"/>
    <property type="match status" value="1"/>
</dbReference>
<dbReference type="Pfam" id="PF01316">
    <property type="entry name" value="Arg_repressor"/>
    <property type="match status" value="1"/>
</dbReference>
<dbReference type="Pfam" id="PF02863">
    <property type="entry name" value="Arg_repressor_C"/>
    <property type="match status" value="1"/>
</dbReference>
<dbReference type="PRINTS" id="PR01467">
    <property type="entry name" value="ARGREPRESSOR"/>
</dbReference>
<dbReference type="SUPFAM" id="SSF55252">
    <property type="entry name" value="C-terminal domain of arginine repressor"/>
    <property type="match status" value="1"/>
</dbReference>
<dbReference type="SUPFAM" id="SSF46785">
    <property type="entry name" value="Winged helix' DNA-binding domain"/>
    <property type="match status" value="1"/>
</dbReference>
<evidence type="ECO:0000250" key="1"/>
<evidence type="ECO:0000305" key="2"/>
<protein>
    <recommendedName>
        <fullName>Arginine repressor</fullName>
    </recommendedName>
</protein>
<sequence length="148" mass="17063">MRKRDRHQLIKKMITEEKLSTQKEIQDRLEAHNVCVTQTTLSRDLREIGLTKVKKNDMVYYVLVNETEKIDLVEFLSHHLEGVARAEFTLVLHTKLGEASVLANIVDVNKDEWILGTVAGANTLLVICRDQHVAKLMEDRLLDLMKDK</sequence>
<accession>P0A2Y3</accession>
<accession>Q54870</accession>
<feature type="chain" id="PRO_0000205127" description="Arginine repressor">
    <location>
        <begin position="1"/>
        <end position="148"/>
    </location>
</feature>
<proteinExistence type="inferred from homology"/>
<comment type="function">
    <text evidence="1">Regulates arginine biosynthesis genes.</text>
</comment>
<comment type="pathway">
    <text>Amino-acid biosynthesis; L-arginine biosynthesis [regulation].</text>
</comment>
<comment type="subcellular location">
    <subcellularLocation>
        <location evidence="1">Cytoplasm</location>
    </subcellularLocation>
</comment>
<comment type="similarity">
    <text evidence="2">Belongs to the ArgR family.</text>
</comment>
<keyword id="KW-0028">Amino-acid biosynthesis</keyword>
<keyword id="KW-0055">Arginine biosynthesis</keyword>
<keyword id="KW-0963">Cytoplasm</keyword>
<keyword id="KW-0238">DNA-binding</keyword>
<keyword id="KW-1185">Reference proteome</keyword>
<keyword id="KW-0678">Repressor</keyword>
<keyword id="KW-0804">Transcription</keyword>
<keyword id="KW-0805">Transcription regulation</keyword>